<dbReference type="EC" id="3.6.4.12"/>
<dbReference type="EMBL" id="AE016820">
    <property type="protein sequence ID" value="AAS54372.1"/>
    <property type="molecule type" value="Genomic_DNA"/>
</dbReference>
<dbReference type="RefSeq" id="NP_986548.1">
    <property type="nucleotide sequence ID" value="NM_211610.1"/>
</dbReference>
<dbReference type="SMR" id="Q750R1"/>
<dbReference type="FunCoup" id="Q750R1">
    <property type="interactions" value="1703"/>
</dbReference>
<dbReference type="STRING" id="284811.Q750R1"/>
<dbReference type="EnsemblFungi" id="AAS54372">
    <property type="protein sequence ID" value="AAS54372"/>
    <property type="gene ID" value="AGOS_AGL119C"/>
</dbReference>
<dbReference type="GeneID" id="4622847"/>
<dbReference type="KEGG" id="ago:AGOS_AGL119C"/>
<dbReference type="eggNOG" id="KOG1942">
    <property type="taxonomic scope" value="Eukaryota"/>
</dbReference>
<dbReference type="HOGENOM" id="CLU_028311_1_1_1"/>
<dbReference type="InParanoid" id="Q750R1"/>
<dbReference type="OMA" id="RTLPYNK"/>
<dbReference type="OrthoDB" id="10060499at2759"/>
<dbReference type="Proteomes" id="UP000000591">
    <property type="component" value="Chromosome VII"/>
</dbReference>
<dbReference type="GO" id="GO:0031011">
    <property type="term" value="C:Ino80 complex"/>
    <property type="evidence" value="ECO:0000318"/>
    <property type="project" value="GO_Central"/>
</dbReference>
<dbReference type="GO" id="GO:0035267">
    <property type="term" value="C:NuA4 histone acetyltransferase complex"/>
    <property type="evidence" value="ECO:0000318"/>
    <property type="project" value="GO_Central"/>
</dbReference>
<dbReference type="GO" id="GO:0097255">
    <property type="term" value="C:R2TP complex"/>
    <property type="evidence" value="ECO:0000318"/>
    <property type="project" value="GO_Central"/>
</dbReference>
<dbReference type="GO" id="GO:0000812">
    <property type="term" value="C:Swr1 complex"/>
    <property type="evidence" value="ECO:0000318"/>
    <property type="project" value="GO_Central"/>
</dbReference>
<dbReference type="GO" id="GO:0043138">
    <property type="term" value="F:3'-5' DNA helicase activity"/>
    <property type="evidence" value="ECO:0007669"/>
    <property type="project" value="EnsemblFungi"/>
</dbReference>
<dbReference type="GO" id="GO:0043139">
    <property type="term" value="F:5'-3' DNA helicase activity"/>
    <property type="evidence" value="ECO:0007669"/>
    <property type="project" value="EnsemblFungi"/>
</dbReference>
<dbReference type="GO" id="GO:0005524">
    <property type="term" value="F:ATP binding"/>
    <property type="evidence" value="ECO:0007669"/>
    <property type="project" value="UniProtKB-KW"/>
</dbReference>
<dbReference type="GO" id="GO:0016887">
    <property type="term" value="F:ATP hydrolysis activity"/>
    <property type="evidence" value="ECO:0007669"/>
    <property type="project" value="InterPro"/>
</dbReference>
<dbReference type="GO" id="GO:0003678">
    <property type="term" value="F:DNA helicase activity"/>
    <property type="evidence" value="ECO:0000318"/>
    <property type="project" value="GO_Central"/>
</dbReference>
<dbReference type="GO" id="GO:0000492">
    <property type="term" value="P:box C/D snoRNP assembly"/>
    <property type="evidence" value="ECO:0000318"/>
    <property type="project" value="GO_Central"/>
</dbReference>
<dbReference type="GO" id="GO:0006338">
    <property type="term" value="P:chromatin remodeling"/>
    <property type="evidence" value="ECO:0000318"/>
    <property type="project" value="GO_Central"/>
</dbReference>
<dbReference type="GO" id="GO:0006281">
    <property type="term" value="P:DNA repair"/>
    <property type="evidence" value="ECO:0007669"/>
    <property type="project" value="UniProtKB-KW"/>
</dbReference>
<dbReference type="GO" id="GO:0006357">
    <property type="term" value="P:regulation of transcription by RNA polymerase II"/>
    <property type="evidence" value="ECO:0000318"/>
    <property type="project" value="GO_Central"/>
</dbReference>
<dbReference type="FunFam" id="1.10.8.60:FF:000010">
    <property type="entry name" value="RuvB-like helicase"/>
    <property type="match status" value="1"/>
</dbReference>
<dbReference type="FunFam" id="2.40.50.360:FF:000001">
    <property type="entry name" value="RuvB-like helicase"/>
    <property type="match status" value="1"/>
</dbReference>
<dbReference type="Gene3D" id="1.10.8.60">
    <property type="match status" value="1"/>
</dbReference>
<dbReference type="Gene3D" id="3.40.50.300">
    <property type="entry name" value="P-loop containing nucleotide triphosphate hydrolases"/>
    <property type="match status" value="1"/>
</dbReference>
<dbReference type="Gene3D" id="2.40.50.360">
    <property type="entry name" value="RuvB-like helicase, domain II"/>
    <property type="match status" value="1"/>
</dbReference>
<dbReference type="InterPro" id="IPR003593">
    <property type="entry name" value="AAA+_ATPase"/>
</dbReference>
<dbReference type="InterPro" id="IPR027417">
    <property type="entry name" value="P-loop_NTPase"/>
</dbReference>
<dbReference type="InterPro" id="IPR027238">
    <property type="entry name" value="RuvB-like"/>
</dbReference>
<dbReference type="InterPro" id="IPR041048">
    <property type="entry name" value="RuvB-like_C"/>
</dbReference>
<dbReference type="InterPro" id="IPR042487">
    <property type="entry name" value="RuvBL1/2_DNA/RNA_bd_dom"/>
</dbReference>
<dbReference type="InterPro" id="IPR010339">
    <property type="entry name" value="TIP49_P-loop"/>
</dbReference>
<dbReference type="PANTHER" id="PTHR11093">
    <property type="entry name" value="RUVB-RELATED REPTIN AND PONTIN"/>
    <property type="match status" value="1"/>
</dbReference>
<dbReference type="Pfam" id="PF06068">
    <property type="entry name" value="TIP49"/>
    <property type="match status" value="1"/>
</dbReference>
<dbReference type="Pfam" id="PF17856">
    <property type="entry name" value="TIP49_C"/>
    <property type="match status" value="1"/>
</dbReference>
<dbReference type="SMART" id="SM00382">
    <property type="entry name" value="AAA"/>
    <property type="match status" value="1"/>
</dbReference>
<dbReference type="SUPFAM" id="SSF52540">
    <property type="entry name" value="P-loop containing nucleoside triphosphate hydrolases"/>
    <property type="match status" value="1"/>
</dbReference>
<reference key="1">
    <citation type="journal article" date="2004" name="Science">
        <title>The Ashbya gossypii genome as a tool for mapping the ancient Saccharomyces cerevisiae genome.</title>
        <authorList>
            <person name="Dietrich F.S."/>
            <person name="Voegeli S."/>
            <person name="Brachat S."/>
            <person name="Lerch A."/>
            <person name="Gates K."/>
            <person name="Steiner S."/>
            <person name="Mohr C."/>
            <person name="Poehlmann R."/>
            <person name="Luedi P."/>
            <person name="Choi S."/>
            <person name="Wing R.A."/>
            <person name="Flavier A."/>
            <person name="Gaffney T.D."/>
            <person name="Philippsen P."/>
        </authorList>
    </citation>
    <scope>NUCLEOTIDE SEQUENCE [LARGE SCALE GENOMIC DNA]</scope>
    <source>
        <strain>ATCC 10895 / CBS 109.51 / FGSC 9923 / NRRL Y-1056</strain>
    </source>
</reference>
<reference key="2">
    <citation type="journal article" date="2013" name="G3 (Bethesda)">
        <title>Genomes of Ashbya fungi isolated from insects reveal four mating-type loci, numerous translocations, lack of transposons, and distinct gene duplications.</title>
        <authorList>
            <person name="Dietrich F.S."/>
            <person name="Voegeli S."/>
            <person name="Kuo S."/>
            <person name="Philippsen P."/>
        </authorList>
    </citation>
    <scope>GENOME REANNOTATION</scope>
    <source>
        <strain>ATCC 10895 / CBS 109.51 / FGSC 9923 / NRRL Y-1056</strain>
    </source>
</reference>
<feature type="chain" id="PRO_0000165648" description="RuvB-like helicase 1">
    <location>
        <begin position="1"/>
        <end position="459"/>
    </location>
</feature>
<feature type="binding site" evidence="1">
    <location>
        <begin position="75"/>
        <end position="82"/>
    </location>
    <ligand>
        <name>ATP</name>
        <dbReference type="ChEBI" id="CHEBI:30616"/>
    </ligand>
</feature>
<organism>
    <name type="scientific">Eremothecium gossypii (strain ATCC 10895 / CBS 109.51 / FGSC 9923 / NRRL Y-1056)</name>
    <name type="common">Yeast</name>
    <name type="synonym">Ashbya gossypii</name>
    <dbReference type="NCBI Taxonomy" id="284811"/>
    <lineage>
        <taxon>Eukaryota</taxon>
        <taxon>Fungi</taxon>
        <taxon>Dikarya</taxon>
        <taxon>Ascomycota</taxon>
        <taxon>Saccharomycotina</taxon>
        <taxon>Saccharomycetes</taxon>
        <taxon>Saccharomycetales</taxon>
        <taxon>Saccharomycetaceae</taxon>
        <taxon>Eremothecium</taxon>
    </lineage>
</organism>
<keyword id="KW-0010">Activator</keyword>
<keyword id="KW-0067">ATP-binding</keyword>
<keyword id="KW-0156">Chromatin regulator</keyword>
<keyword id="KW-0227">DNA damage</keyword>
<keyword id="KW-0234">DNA repair</keyword>
<keyword id="KW-0347">Helicase</keyword>
<keyword id="KW-0378">Hydrolase</keyword>
<keyword id="KW-0547">Nucleotide-binding</keyword>
<keyword id="KW-0539">Nucleus</keyword>
<keyword id="KW-1185">Reference proteome</keyword>
<keyword id="KW-0804">Transcription</keyword>
<keyword id="KW-0805">Transcription regulation</keyword>
<protein>
    <recommendedName>
        <fullName>RuvB-like helicase 1</fullName>
        <ecNumber>3.6.4.12</ecNumber>
    </recommendedName>
</protein>
<accession>Q750R1</accession>
<comment type="function">
    <text evidence="1">DNA helicase which participates in several chromatin remodeling complexes, including the SWR1 and the INO80 complexes. The SWR1 complex mediates the ATP-dependent exchange of histone H2A for the H2A variant HZT1 leading to transcriptional regulation of selected genes by chromatin remodeling. The INO80 complex remodels chromatin by shifting nucleosomes and is involved in DNA repair. Also involved in pre-rRNA processing (By similarity).</text>
</comment>
<comment type="catalytic activity">
    <reaction>
        <text>ATP + H2O = ADP + phosphate + H(+)</text>
        <dbReference type="Rhea" id="RHEA:13065"/>
        <dbReference type="ChEBI" id="CHEBI:15377"/>
        <dbReference type="ChEBI" id="CHEBI:15378"/>
        <dbReference type="ChEBI" id="CHEBI:30616"/>
        <dbReference type="ChEBI" id="CHEBI:43474"/>
        <dbReference type="ChEBI" id="CHEBI:456216"/>
        <dbReference type="EC" id="3.6.4.12"/>
    </reaction>
</comment>
<comment type="subunit">
    <text evidence="1">May form heterododecamers with RVB2. Component of the SWR1 chromatin remodeling complex, the INO80 chromatin remodeling complex, and of the R2TP complex (By similarity).</text>
</comment>
<comment type="subcellular location">
    <subcellularLocation>
        <location evidence="1">Nucleus</location>
    </subcellularLocation>
</comment>
<comment type="similarity">
    <text evidence="2">Belongs to the RuvB family.</text>
</comment>
<evidence type="ECO:0000250" key="1"/>
<evidence type="ECO:0000305" key="2"/>
<sequence>MVQISEVKDQVPGSSAGARTAAHTHIKGLGLDEFGAAKQVEGGFVGQVEAREACGVIVDLIKAKRMSGRAILLAGGPSTGKTALALAITQELGPKVPFCPLVGSELFSVEVKKTETLMENFRRAIGLRIKEVKEVYEGEVTELTPEEAENPLGGYGKTISHVIVGLKSAKGTKTLRLDPTIYESIQREKVSVGDVIYIESNSGAVKRVGRSDAYATEFDLEAEEYVPLPKGEVHKKKEIIQDVTLHDLDVANARPQGGQDVISMMGQLMKPKKTEITEKLRHEVNKVVAKYIDQGVAELVPGVLFIDEVNMLDIEIFTFLNRALELEIAPVVVLASNRGMTTVRGTEDVVSAHGIPPDLIDRLLIVRTLPYTQDEIRVIIEKRSKVENLQLEQAALDLLAAMGSDMSLRYALQLLTPAGILAATAGRTEILLSDIEEAKMLFLDAKRSTKILESNSNYL</sequence>
<name>RUVB1_EREGS</name>
<gene>
    <name type="primary">RVB1</name>
    <name type="ordered locus">AGL119C</name>
</gene>
<proteinExistence type="inferred from homology"/>